<accession>P0AAC3</accession>
<accession>P03807</accession>
<accession>P77421</accession>
<feature type="initiator methionine" description="Removed" evidence="1">
    <location>
        <position position="1"/>
    </location>
</feature>
<feature type="chain" id="PRO_0000147424" description="Universal stress protein E">
    <location>
        <begin position="2"/>
        <end position="316"/>
    </location>
</feature>
<gene>
    <name type="primary">uspE</name>
    <name type="ordered locus">SF1837</name>
    <name type="ordered locus">S1433</name>
</gene>
<organism>
    <name type="scientific">Shigella flexneri</name>
    <dbReference type="NCBI Taxonomy" id="623"/>
    <lineage>
        <taxon>Bacteria</taxon>
        <taxon>Pseudomonadati</taxon>
        <taxon>Pseudomonadota</taxon>
        <taxon>Gammaproteobacteria</taxon>
        <taxon>Enterobacterales</taxon>
        <taxon>Enterobacteriaceae</taxon>
        <taxon>Shigella</taxon>
    </lineage>
</organism>
<evidence type="ECO:0000250" key="1"/>
<evidence type="ECO:0000305" key="2"/>
<protein>
    <recommendedName>
        <fullName>Universal stress protein E</fullName>
    </recommendedName>
</protein>
<proteinExistence type="inferred from homology"/>
<keyword id="KW-0963">Cytoplasm</keyword>
<keyword id="KW-1185">Reference proteome</keyword>
<comment type="function">
    <text evidence="1">Required for resistance to DNA-damaging agents.</text>
</comment>
<comment type="subcellular location">
    <subcellularLocation>
        <location evidence="1">Cytoplasm</location>
    </subcellularLocation>
</comment>
<comment type="similarity">
    <text evidence="2">Belongs to the universal stress protein A family.</text>
</comment>
<name>USPE_SHIFL</name>
<dbReference type="EMBL" id="AE005674">
    <property type="protein sequence ID" value="AAN43399.2"/>
    <property type="molecule type" value="Genomic_DNA"/>
</dbReference>
<dbReference type="EMBL" id="AE014073">
    <property type="protein sequence ID" value="AAP16835.1"/>
    <property type="molecule type" value="Genomic_DNA"/>
</dbReference>
<dbReference type="RefSeq" id="WP_001262123.1">
    <property type="nucleotide sequence ID" value="NZ_WPGW01000191.1"/>
</dbReference>
<dbReference type="SMR" id="P0AAC3"/>
<dbReference type="STRING" id="198214.SF1837"/>
<dbReference type="PaxDb" id="198214-SF1837"/>
<dbReference type="GeneID" id="93775468"/>
<dbReference type="KEGG" id="sfl:SF1837"/>
<dbReference type="KEGG" id="sfx:S1433"/>
<dbReference type="PATRIC" id="fig|198214.7.peg.2185"/>
<dbReference type="HOGENOM" id="CLU_049301_1_2_6"/>
<dbReference type="Proteomes" id="UP000001006">
    <property type="component" value="Chromosome"/>
</dbReference>
<dbReference type="Proteomes" id="UP000002673">
    <property type="component" value="Chromosome"/>
</dbReference>
<dbReference type="GO" id="GO:0005737">
    <property type="term" value="C:cytoplasm"/>
    <property type="evidence" value="ECO:0007669"/>
    <property type="project" value="UniProtKB-SubCell"/>
</dbReference>
<dbReference type="CDD" id="cd23943">
    <property type="entry name" value="USP-E_repeat1"/>
    <property type="match status" value="1"/>
</dbReference>
<dbReference type="CDD" id="cd23660">
    <property type="entry name" value="USP-E_repeat2"/>
    <property type="match status" value="1"/>
</dbReference>
<dbReference type="FunFam" id="3.40.50.12370:FF:000001">
    <property type="entry name" value="Universal stress protein E"/>
    <property type="match status" value="1"/>
</dbReference>
<dbReference type="Gene3D" id="3.40.50.12370">
    <property type="match status" value="1"/>
</dbReference>
<dbReference type="InterPro" id="IPR006016">
    <property type="entry name" value="UspA"/>
</dbReference>
<dbReference type="NCBIfam" id="NF008380">
    <property type="entry name" value="PRK11175.1"/>
    <property type="match status" value="1"/>
</dbReference>
<dbReference type="PANTHER" id="PTHR47892">
    <property type="entry name" value="UNIVERSAL STRESS PROTEIN E"/>
    <property type="match status" value="1"/>
</dbReference>
<dbReference type="PANTHER" id="PTHR47892:SF1">
    <property type="entry name" value="UNIVERSAL STRESS PROTEIN E"/>
    <property type="match status" value="1"/>
</dbReference>
<dbReference type="Pfam" id="PF00582">
    <property type="entry name" value="Usp"/>
    <property type="match status" value="2"/>
</dbReference>
<dbReference type="SUPFAM" id="SSF52402">
    <property type="entry name" value="Adenine nucleotide alpha hydrolases-like"/>
    <property type="match status" value="2"/>
</dbReference>
<reference key="1">
    <citation type="journal article" date="2002" name="Nucleic Acids Res.">
        <title>Genome sequence of Shigella flexneri 2a: insights into pathogenicity through comparison with genomes of Escherichia coli K12 and O157.</title>
        <authorList>
            <person name="Jin Q."/>
            <person name="Yuan Z."/>
            <person name="Xu J."/>
            <person name="Wang Y."/>
            <person name="Shen Y."/>
            <person name="Lu W."/>
            <person name="Wang J."/>
            <person name="Liu H."/>
            <person name="Yang J."/>
            <person name="Yang F."/>
            <person name="Zhang X."/>
            <person name="Zhang J."/>
            <person name="Yang G."/>
            <person name="Wu H."/>
            <person name="Qu D."/>
            <person name="Dong J."/>
            <person name="Sun L."/>
            <person name="Xue Y."/>
            <person name="Zhao A."/>
            <person name="Gao Y."/>
            <person name="Zhu J."/>
            <person name="Kan B."/>
            <person name="Ding K."/>
            <person name="Chen S."/>
            <person name="Cheng H."/>
            <person name="Yao Z."/>
            <person name="He B."/>
            <person name="Chen R."/>
            <person name="Ma D."/>
            <person name="Qiang B."/>
            <person name="Wen Y."/>
            <person name="Hou Y."/>
            <person name="Yu J."/>
        </authorList>
    </citation>
    <scope>NUCLEOTIDE SEQUENCE [LARGE SCALE GENOMIC DNA]</scope>
    <source>
        <strain>301 / Serotype 2a</strain>
    </source>
</reference>
<reference key="2">
    <citation type="journal article" date="2003" name="Infect. Immun.">
        <title>Complete genome sequence and comparative genomics of Shigella flexneri serotype 2a strain 2457T.</title>
        <authorList>
            <person name="Wei J."/>
            <person name="Goldberg M.B."/>
            <person name="Burland V."/>
            <person name="Venkatesan M.M."/>
            <person name="Deng W."/>
            <person name="Fournier G."/>
            <person name="Mayhew G.F."/>
            <person name="Plunkett G. III"/>
            <person name="Rose D.J."/>
            <person name="Darling A."/>
            <person name="Mau B."/>
            <person name="Perna N.T."/>
            <person name="Payne S.M."/>
            <person name="Runyen-Janecky L.J."/>
            <person name="Zhou S."/>
            <person name="Schwartz D.C."/>
            <person name="Blattner F.R."/>
        </authorList>
    </citation>
    <scope>NUCLEOTIDE SEQUENCE [LARGE SCALE GENOMIC DNA]</scope>
    <source>
        <strain>ATCC 700930 / 2457T / Serotype 2a</strain>
    </source>
</reference>
<sequence length="316" mass="35707">MAMYQNMLVVIDPNQDDQPALRRAVYLHQRIGGKIKAFLPIYDFSYEMTTLLSPDERTAMRQGVISQRTAWIHEQAKYYLNAGVPIEIKVVWHNRPFEAIIQEVISGGHDLVLKMAHQHDRLEAVIFTPTDWHLLRKCPSPVWMVKDQPWPEGGKALVAVNLASEEPYHNALNEKLVKETIELAEQVNHTEVHLVGAYPVTPINIAIELPEFDPSVYNDAIRGQHLLAMKALRQKFGINENMTHVEKGLPEEVIPDLAEHLQAGIVVLGTVGRTGISAAFLGNTAEQVIDHLRCDLLVIKPDQYQTPVELDDEEDD</sequence>